<name>ARLY_MYCBT</name>
<evidence type="ECO:0000255" key="1">
    <source>
        <dbReference type="HAMAP-Rule" id="MF_00006"/>
    </source>
</evidence>
<reference key="1">
    <citation type="journal article" date="2009" name="Vaccine">
        <title>Whole genome sequence analysis of Mycobacterium bovis bacillus Calmette-Guerin (BCG) Tokyo 172: a comparative study of BCG vaccine substrains.</title>
        <authorList>
            <person name="Seki M."/>
            <person name="Honda I."/>
            <person name="Fujita I."/>
            <person name="Yano I."/>
            <person name="Yamamoto S."/>
            <person name="Koyama A."/>
        </authorList>
    </citation>
    <scope>NUCLEOTIDE SEQUENCE [LARGE SCALE GENOMIC DNA]</scope>
    <source>
        <strain>BCG / Tokyo 172 / ATCC 35737 / TMC 1019</strain>
    </source>
</reference>
<dbReference type="EC" id="4.3.2.1" evidence="1"/>
<dbReference type="EMBL" id="AP010918">
    <property type="protein sequence ID" value="BAH25961.1"/>
    <property type="molecule type" value="Genomic_DNA"/>
</dbReference>
<dbReference type="RefSeq" id="WP_003408180.1">
    <property type="nucleotide sequence ID" value="NZ_CP014566.1"/>
</dbReference>
<dbReference type="SMR" id="C1ANT2"/>
<dbReference type="KEGG" id="mbt:JTY_1673"/>
<dbReference type="HOGENOM" id="CLU_027272_2_2_11"/>
<dbReference type="UniPathway" id="UPA00068">
    <property type="reaction ID" value="UER00114"/>
</dbReference>
<dbReference type="GO" id="GO:0005829">
    <property type="term" value="C:cytosol"/>
    <property type="evidence" value="ECO:0007669"/>
    <property type="project" value="TreeGrafter"/>
</dbReference>
<dbReference type="GO" id="GO:0004056">
    <property type="term" value="F:argininosuccinate lyase activity"/>
    <property type="evidence" value="ECO:0007669"/>
    <property type="project" value="UniProtKB-UniRule"/>
</dbReference>
<dbReference type="GO" id="GO:0042450">
    <property type="term" value="P:arginine biosynthetic process via ornithine"/>
    <property type="evidence" value="ECO:0007669"/>
    <property type="project" value="InterPro"/>
</dbReference>
<dbReference type="GO" id="GO:0006526">
    <property type="term" value="P:L-arginine biosynthetic process"/>
    <property type="evidence" value="ECO:0007669"/>
    <property type="project" value="UniProtKB-UniRule"/>
</dbReference>
<dbReference type="CDD" id="cd01359">
    <property type="entry name" value="Argininosuccinate_lyase"/>
    <property type="match status" value="1"/>
</dbReference>
<dbReference type="FunFam" id="1.10.40.30:FF:000001">
    <property type="entry name" value="Argininosuccinate lyase"/>
    <property type="match status" value="1"/>
</dbReference>
<dbReference type="FunFam" id="1.20.200.10:FF:000015">
    <property type="entry name" value="argininosuccinate lyase isoform X2"/>
    <property type="match status" value="1"/>
</dbReference>
<dbReference type="Gene3D" id="1.10.40.30">
    <property type="entry name" value="Fumarase/aspartase (C-terminal domain)"/>
    <property type="match status" value="1"/>
</dbReference>
<dbReference type="Gene3D" id="1.20.200.10">
    <property type="entry name" value="Fumarase/aspartase (Central domain)"/>
    <property type="match status" value="1"/>
</dbReference>
<dbReference type="Gene3D" id="1.10.275.10">
    <property type="entry name" value="Fumarase/aspartase (N-terminal domain)"/>
    <property type="match status" value="1"/>
</dbReference>
<dbReference type="HAMAP" id="MF_00006">
    <property type="entry name" value="Arg_succ_lyase"/>
    <property type="match status" value="1"/>
</dbReference>
<dbReference type="InterPro" id="IPR029419">
    <property type="entry name" value="Arg_succ_lyase_C"/>
</dbReference>
<dbReference type="InterPro" id="IPR009049">
    <property type="entry name" value="Argininosuccinate_lyase"/>
</dbReference>
<dbReference type="InterPro" id="IPR024083">
    <property type="entry name" value="Fumarase/histidase_N"/>
</dbReference>
<dbReference type="InterPro" id="IPR020557">
    <property type="entry name" value="Fumarate_lyase_CS"/>
</dbReference>
<dbReference type="InterPro" id="IPR000362">
    <property type="entry name" value="Fumarate_lyase_fam"/>
</dbReference>
<dbReference type="InterPro" id="IPR022761">
    <property type="entry name" value="Fumarate_lyase_N"/>
</dbReference>
<dbReference type="InterPro" id="IPR008948">
    <property type="entry name" value="L-Aspartase-like"/>
</dbReference>
<dbReference type="NCBIfam" id="TIGR00838">
    <property type="entry name" value="argH"/>
    <property type="match status" value="1"/>
</dbReference>
<dbReference type="PANTHER" id="PTHR43814">
    <property type="entry name" value="ARGININOSUCCINATE LYASE"/>
    <property type="match status" value="1"/>
</dbReference>
<dbReference type="PANTHER" id="PTHR43814:SF1">
    <property type="entry name" value="ARGININOSUCCINATE LYASE"/>
    <property type="match status" value="1"/>
</dbReference>
<dbReference type="Pfam" id="PF14698">
    <property type="entry name" value="ASL_C2"/>
    <property type="match status" value="1"/>
</dbReference>
<dbReference type="Pfam" id="PF00206">
    <property type="entry name" value="Lyase_1"/>
    <property type="match status" value="1"/>
</dbReference>
<dbReference type="PRINTS" id="PR00145">
    <property type="entry name" value="ARGSUCLYASE"/>
</dbReference>
<dbReference type="PRINTS" id="PR00149">
    <property type="entry name" value="FUMRATELYASE"/>
</dbReference>
<dbReference type="SUPFAM" id="SSF48557">
    <property type="entry name" value="L-aspartase-like"/>
    <property type="match status" value="1"/>
</dbReference>
<dbReference type="PROSITE" id="PS00163">
    <property type="entry name" value="FUMARATE_LYASES"/>
    <property type="match status" value="1"/>
</dbReference>
<organism>
    <name type="scientific">Mycobacterium bovis (strain BCG / Tokyo 172 / ATCC 35737 / TMC 1019)</name>
    <dbReference type="NCBI Taxonomy" id="561275"/>
    <lineage>
        <taxon>Bacteria</taxon>
        <taxon>Bacillati</taxon>
        <taxon>Actinomycetota</taxon>
        <taxon>Actinomycetes</taxon>
        <taxon>Mycobacteriales</taxon>
        <taxon>Mycobacteriaceae</taxon>
        <taxon>Mycobacterium</taxon>
        <taxon>Mycobacterium tuberculosis complex</taxon>
    </lineage>
</organism>
<proteinExistence type="inferred from homology"/>
<comment type="catalytic activity">
    <reaction evidence="1">
        <text>2-(N(omega)-L-arginino)succinate = fumarate + L-arginine</text>
        <dbReference type="Rhea" id="RHEA:24020"/>
        <dbReference type="ChEBI" id="CHEBI:29806"/>
        <dbReference type="ChEBI" id="CHEBI:32682"/>
        <dbReference type="ChEBI" id="CHEBI:57472"/>
        <dbReference type="EC" id="4.3.2.1"/>
    </reaction>
</comment>
<comment type="pathway">
    <text evidence="1">Amino-acid biosynthesis; L-arginine biosynthesis; L-arginine from L-ornithine and carbamoyl phosphate: step 3/3.</text>
</comment>
<comment type="subcellular location">
    <subcellularLocation>
        <location evidence="1">Cytoplasm</location>
    </subcellularLocation>
</comment>
<comment type="similarity">
    <text evidence="1">Belongs to the lyase 1 family. Argininosuccinate lyase subfamily.</text>
</comment>
<sequence length="470" mass="49774">MSTNEGSLWGGRFAGGPSDALAALSKSTHFDWVLAPYDLTASRAHTMVLFRAGLLTEEQRDGLLAGLDSLAQDVADGSFGPLVTDEDVHAALERGLIDRVGPDLGGRLRAGRSRNDQVAALFRMWLRDAVRRVATGVLDVVGALAEQAAAHPSAIMPGKTHLQSAQPILLAHHLLAHAHPLLRDLDRIVDFDKRAAVSPYGSGALAGSSLGLDPDAIAADLGFSAAADNSVDATAARDFAAEAAFVFAMIAVDLSRLAEDIIVWSSTEFGYVTLHDSWSTGSSIMPQKKNPDIAELARGKSGRLIGNLAGLLATLKAQPLAYNRDLQEDKEPVFDSVAQLELLLPAMAGLVASLTFNVQRMAELAPAGYTLATDLAEWLVRQGVPFRSAHEAAGAAVRAAEQRGVGLQELTDDELAAISPELTPQVREVLTIEGSVSARDCRGGTAPGRVAEQLNAIGEAAERLRRQLVR</sequence>
<gene>
    <name evidence="1" type="primary">argH</name>
    <name type="ordered locus">JTY_1673</name>
</gene>
<protein>
    <recommendedName>
        <fullName evidence="1">Argininosuccinate lyase</fullName>
        <shortName evidence="1">ASAL</shortName>
        <ecNumber evidence="1">4.3.2.1</ecNumber>
    </recommendedName>
    <alternativeName>
        <fullName evidence="1">Arginosuccinase</fullName>
    </alternativeName>
</protein>
<feature type="chain" id="PRO_1000116335" description="Argininosuccinate lyase">
    <location>
        <begin position="1"/>
        <end position="470"/>
    </location>
</feature>
<accession>C1ANT2</accession>
<keyword id="KW-0028">Amino-acid biosynthesis</keyword>
<keyword id="KW-0055">Arginine biosynthesis</keyword>
<keyword id="KW-0963">Cytoplasm</keyword>
<keyword id="KW-0456">Lyase</keyword>